<name>QUEC_RICCN</name>
<sequence length="228" mass="25487">MKKKAVILLSGGPDSTTVLEIVSKTDYEIYALSFNYHRRNSLEVQKIQGLIKDYNVKQHRVINIDLQSFIGSALTDDNIDVPKFQNTDQLPSDIPVTYVPARNTIFLSYALGVAEVIGARDIFIGVHTNDYTNYPDCRPEYIKSFEAMANLATRVGVNGEKITIHAPLINMTKEQIIKKGLELGVDYSKTISCYDPTEDGLSCGQCLSCIARLDAFKKNNVQDPIKYV</sequence>
<organism>
    <name type="scientific">Rickettsia conorii (strain ATCC VR-613 / Malish 7)</name>
    <dbReference type="NCBI Taxonomy" id="272944"/>
    <lineage>
        <taxon>Bacteria</taxon>
        <taxon>Pseudomonadati</taxon>
        <taxon>Pseudomonadota</taxon>
        <taxon>Alphaproteobacteria</taxon>
        <taxon>Rickettsiales</taxon>
        <taxon>Rickettsiaceae</taxon>
        <taxon>Rickettsieae</taxon>
        <taxon>Rickettsia</taxon>
        <taxon>spotted fever group</taxon>
    </lineage>
</organism>
<dbReference type="EC" id="6.3.4.20" evidence="1"/>
<dbReference type="EMBL" id="AE006914">
    <property type="protein sequence ID" value="AAL03608.1"/>
    <property type="molecule type" value="Genomic_DNA"/>
</dbReference>
<dbReference type="PIR" id="F97833">
    <property type="entry name" value="F97833"/>
</dbReference>
<dbReference type="RefSeq" id="WP_010977648.1">
    <property type="nucleotide sequence ID" value="NC_003103.1"/>
</dbReference>
<dbReference type="SMR" id="Q92GQ2"/>
<dbReference type="GeneID" id="928206"/>
<dbReference type="KEGG" id="rco:RC1070"/>
<dbReference type="PATRIC" id="fig|272944.4.peg.1226"/>
<dbReference type="HOGENOM" id="CLU_081854_1_1_5"/>
<dbReference type="UniPathway" id="UPA00391"/>
<dbReference type="Proteomes" id="UP000000816">
    <property type="component" value="Chromosome"/>
</dbReference>
<dbReference type="GO" id="GO:0005524">
    <property type="term" value="F:ATP binding"/>
    <property type="evidence" value="ECO:0007669"/>
    <property type="project" value="UniProtKB-UniRule"/>
</dbReference>
<dbReference type="GO" id="GO:0016879">
    <property type="term" value="F:ligase activity, forming carbon-nitrogen bonds"/>
    <property type="evidence" value="ECO:0007669"/>
    <property type="project" value="UniProtKB-UniRule"/>
</dbReference>
<dbReference type="GO" id="GO:0008270">
    <property type="term" value="F:zinc ion binding"/>
    <property type="evidence" value="ECO:0007669"/>
    <property type="project" value="UniProtKB-UniRule"/>
</dbReference>
<dbReference type="GO" id="GO:0008616">
    <property type="term" value="P:queuosine biosynthetic process"/>
    <property type="evidence" value="ECO:0007669"/>
    <property type="project" value="UniProtKB-UniRule"/>
</dbReference>
<dbReference type="CDD" id="cd01995">
    <property type="entry name" value="QueC-like"/>
    <property type="match status" value="1"/>
</dbReference>
<dbReference type="Gene3D" id="3.40.50.620">
    <property type="entry name" value="HUPs"/>
    <property type="match status" value="1"/>
</dbReference>
<dbReference type="HAMAP" id="MF_01633">
    <property type="entry name" value="QueC"/>
    <property type="match status" value="1"/>
</dbReference>
<dbReference type="InterPro" id="IPR018317">
    <property type="entry name" value="QueC"/>
</dbReference>
<dbReference type="InterPro" id="IPR014729">
    <property type="entry name" value="Rossmann-like_a/b/a_fold"/>
</dbReference>
<dbReference type="NCBIfam" id="TIGR00364">
    <property type="entry name" value="7-cyano-7-deazaguanine synthase QueC"/>
    <property type="match status" value="1"/>
</dbReference>
<dbReference type="PANTHER" id="PTHR42914">
    <property type="entry name" value="7-CYANO-7-DEAZAGUANINE SYNTHASE"/>
    <property type="match status" value="1"/>
</dbReference>
<dbReference type="PANTHER" id="PTHR42914:SF1">
    <property type="entry name" value="7-CYANO-7-DEAZAGUANINE SYNTHASE"/>
    <property type="match status" value="1"/>
</dbReference>
<dbReference type="Pfam" id="PF06508">
    <property type="entry name" value="QueC"/>
    <property type="match status" value="1"/>
</dbReference>
<dbReference type="PIRSF" id="PIRSF006293">
    <property type="entry name" value="ExsB"/>
    <property type="match status" value="1"/>
</dbReference>
<dbReference type="SUPFAM" id="SSF52402">
    <property type="entry name" value="Adenine nucleotide alpha hydrolases-like"/>
    <property type="match status" value="1"/>
</dbReference>
<evidence type="ECO:0000255" key="1">
    <source>
        <dbReference type="HAMAP-Rule" id="MF_01633"/>
    </source>
</evidence>
<comment type="function">
    <text evidence="1">Catalyzes the ATP-dependent conversion of 7-carboxy-7-deazaguanine (CDG) to 7-cyano-7-deazaguanine (preQ(0)).</text>
</comment>
<comment type="catalytic activity">
    <reaction evidence="1">
        <text>7-carboxy-7-deazaguanine + NH4(+) + ATP = 7-cyano-7-deazaguanine + ADP + phosphate + H2O + H(+)</text>
        <dbReference type="Rhea" id="RHEA:27982"/>
        <dbReference type="ChEBI" id="CHEBI:15377"/>
        <dbReference type="ChEBI" id="CHEBI:15378"/>
        <dbReference type="ChEBI" id="CHEBI:28938"/>
        <dbReference type="ChEBI" id="CHEBI:30616"/>
        <dbReference type="ChEBI" id="CHEBI:43474"/>
        <dbReference type="ChEBI" id="CHEBI:45075"/>
        <dbReference type="ChEBI" id="CHEBI:61036"/>
        <dbReference type="ChEBI" id="CHEBI:456216"/>
        <dbReference type="EC" id="6.3.4.20"/>
    </reaction>
</comment>
<comment type="cofactor">
    <cofactor evidence="1">
        <name>Zn(2+)</name>
        <dbReference type="ChEBI" id="CHEBI:29105"/>
    </cofactor>
    <text evidence="1">Binds 1 zinc ion per subunit.</text>
</comment>
<comment type="pathway">
    <text evidence="1">Purine metabolism; 7-cyano-7-deazaguanine biosynthesis.</text>
</comment>
<comment type="similarity">
    <text evidence="1">Belongs to the QueC family.</text>
</comment>
<accession>Q92GQ2</accession>
<protein>
    <recommendedName>
        <fullName evidence="1">7-cyano-7-deazaguanine synthase</fullName>
        <ecNumber evidence="1">6.3.4.20</ecNumber>
    </recommendedName>
    <alternativeName>
        <fullName evidence="1">7-cyano-7-carbaguanine synthase</fullName>
    </alternativeName>
    <alternativeName>
        <fullName evidence="1">PreQ(0) synthase</fullName>
    </alternativeName>
    <alternativeName>
        <fullName evidence="1">Queuosine biosynthesis protein QueC</fullName>
    </alternativeName>
</protein>
<feature type="chain" id="PRO_0000246912" description="7-cyano-7-deazaguanine synthase">
    <location>
        <begin position="1"/>
        <end position="228"/>
    </location>
</feature>
<feature type="binding site" evidence="1">
    <location>
        <begin position="9"/>
        <end position="19"/>
    </location>
    <ligand>
        <name>ATP</name>
        <dbReference type="ChEBI" id="CHEBI:30616"/>
    </ligand>
</feature>
<feature type="binding site" evidence="1">
    <location>
        <position position="193"/>
    </location>
    <ligand>
        <name>Zn(2+)</name>
        <dbReference type="ChEBI" id="CHEBI:29105"/>
    </ligand>
</feature>
<feature type="binding site" evidence="1">
    <location>
        <position position="203"/>
    </location>
    <ligand>
        <name>Zn(2+)</name>
        <dbReference type="ChEBI" id="CHEBI:29105"/>
    </ligand>
</feature>
<feature type="binding site" evidence="1">
    <location>
        <position position="206"/>
    </location>
    <ligand>
        <name>Zn(2+)</name>
        <dbReference type="ChEBI" id="CHEBI:29105"/>
    </ligand>
</feature>
<feature type="binding site" evidence="1">
    <location>
        <position position="209"/>
    </location>
    <ligand>
        <name>Zn(2+)</name>
        <dbReference type="ChEBI" id="CHEBI:29105"/>
    </ligand>
</feature>
<keyword id="KW-0067">ATP-binding</keyword>
<keyword id="KW-0436">Ligase</keyword>
<keyword id="KW-0479">Metal-binding</keyword>
<keyword id="KW-0547">Nucleotide-binding</keyword>
<keyword id="KW-0671">Queuosine biosynthesis</keyword>
<keyword id="KW-0862">Zinc</keyword>
<reference key="1">
    <citation type="journal article" date="2001" name="Science">
        <title>Mechanisms of evolution in Rickettsia conorii and R. prowazekii.</title>
        <authorList>
            <person name="Ogata H."/>
            <person name="Audic S."/>
            <person name="Renesto-Audiffren P."/>
            <person name="Fournier P.-E."/>
            <person name="Barbe V."/>
            <person name="Samson D."/>
            <person name="Roux V."/>
            <person name="Cossart P."/>
            <person name="Weissenbach J."/>
            <person name="Claverie J.-M."/>
            <person name="Raoult D."/>
        </authorList>
    </citation>
    <scope>NUCLEOTIDE SEQUENCE [LARGE SCALE GENOMIC DNA]</scope>
    <source>
        <strain>ATCC VR-613 / Malish 7</strain>
    </source>
</reference>
<proteinExistence type="inferred from homology"/>
<gene>
    <name evidence="1" type="primary">queC</name>
    <name type="ordered locus">RC1070</name>
</gene>